<proteinExistence type="inferred from homology"/>
<keyword id="KW-0067">ATP-binding</keyword>
<keyword id="KW-0963">Cytoplasm</keyword>
<keyword id="KW-0436">Ligase</keyword>
<keyword id="KW-0547">Nucleotide-binding</keyword>
<keyword id="KW-0566">Pantothenate biosynthesis</keyword>
<keyword id="KW-1185">Reference proteome</keyword>
<protein>
    <recommendedName>
        <fullName evidence="1">Pantothenate synthetase</fullName>
        <shortName evidence="1">PS</shortName>
        <ecNumber evidence="1">6.3.2.1</ecNumber>
    </recommendedName>
    <alternativeName>
        <fullName evidence="1">Pantoate--beta-alanine ligase</fullName>
    </alternativeName>
    <alternativeName>
        <fullName evidence="1">Pantoate-activating enzyme</fullName>
    </alternativeName>
</protein>
<accession>O67891</accession>
<name>PANC_AQUAE</name>
<evidence type="ECO:0000255" key="1">
    <source>
        <dbReference type="HAMAP-Rule" id="MF_00158"/>
    </source>
</evidence>
<dbReference type="EC" id="6.3.2.1" evidence="1"/>
<dbReference type="EMBL" id="AE000657">
    <property type="protein sequence ID" value="AAC07847.1"/>
    <property type="molecule type" value="Genomic_DNA"/>
</dbReference>
<dbReference type="PIR" id="G70482">
    <property type="entry name" value="G70482"/>
</dbReference>
<dbReference type="RefSeq" id="NP_214460.1">
    <property type="nucleotide sequence ID" value="NC_000918.1"/>
</dbReference>
<dbReference type="RefSeq" id="WP_010881396.1">
    <property type="nucleotide sequence ID" value="NC_000918.1"/>
</dbReference>
<dbReference type="SMR" id="O67891"/>
<dbReference type="FunCoup" id="O67891">
    <property type="interactions" value="455"/>
</dbReference>
<dbReference type="STRING" id="224324.aq_2132"/>
<dbReference type="EnsemblBacteria" id="AAC07847">
    <property type="protein sequence ID" value="AAC07847"/>
    <property type="gene ID" value="aq_2132"/>
</dbReference>
<dbReference type="KEGG" id="aae:aq_2132"/>
<dbReference type="PATRIC" id="fig|224324.8.peg.1648"/>
<dbReference type="eggNOG" id="COG0414">
    <property type="taxonomic scope" value="Bacteria"/>
</dbReference>
<dbReference type="HOGENOM" id="CLU_047148_0_0_0"/>
<dbReference type="InParanoid" id="O67891"/>
<dbReference type="OrthoDB" id="9773087at2"/>
<dbReference type="UniPathway" id="UPA00028">
    <property type="reaction ID" value="UER00005"/>
</dbReference>
<dbReference type="Proteomes" id="UP000000798">
    <property type="component" value="Chromosome"/>
</dbReference>
<dbReference type="GO" id="GO:0005829">
    <property type="term" value="C:cytosol"/>
    <property type="evidence" value="ECO:0000318"/>
    <property type="project" value="GO_Central"/>
</dbReference>
<dbReference type="GO" id="GO:0005524">
    <property type="term" value="F:ATP binding"/>
    <property type="evidence" value="ECO:0007669"/>
    <property type="project" value="UniProtKB-KW"/>
</dbReference>
<dbReference type="GO" id="GO:0004592">
    <property type="term" value="F:pantoate-beta-alanine ligase activity"/>
    <property type="evidence" value="ECO:0000318"/>
    <property type="project" value="GO_Central"/>
</dbReference>
<dbReference type="GO" id="GO:0015940">
    <property type="term" value="P:pantothenate biosynthetic process"/>
    <property type="evidence" value="ECO:0000318"/>
    <property type="project" value="GO_Central"/>
</dbReference>
<dbReference type="CDD" id="cd00560">
    <property type="entry name" value="PanC"/>
    <property type="match status" value="1"/>
</dbReference>
<dbReference type="FunFam" id="3.30.1300.10:FF:000001">
    <property type="entry name" value="Pantothenate synthetase"/>
    <property type="match status" value="1"/>
</dbReference>
<dbReference type="FunFam" id="3.40.50.620:FF:000114">
    <property type="entry name" value="Pantothenate synthetase"/>
    <property type="match status" value="1"/>
</dbReference>
<dbReference type="Gene3D" id="3.40.50.620">
    <property type="entry name" value="HUPs"/>
    <property type="match status" value="1"/>
</dbReference>
<dbReference type="Gene3D" id="3.30.1300.10">
    <property type="entry name" value="Pantoate-beta-alanine ligase, C-terminal domain"/>
    <property type="match status" value="1"/>
</dbReference>
<dbReference type="HAMAP" id="MF_00158">
    <property type="entry name" value="PanC"/>
    <property type="match status" value="1"/>
</dbReference>
<dbReference type="InterPro" id="IPR004821">
    <property type="entry name" value="Cyt_trans-like"/>
</dbReference>
<dbReference type="InterPro" id="IPR003721">
    <property type="entry name" value="Pantoate_ligase"/>
</dbReference>
<dbReference type="InterPro" id="IPR042176">
    <property type="entry name" value="Pantoate_ligase_C"/>
</dbReference>
<dbReference type="InterPro" id="IPR014729">
    <property type="entry name" value="Rossmann-like_a/b/a_fold"/>
</dbReference>
<dbReference type="NCBIfam" id="TIGR00125">
    <property type="entry name" value="cyt_tran_rel"/>
    <property type="match status" value="1"/>
</dbReference>
<dbReference type="NCBIfam" id="TIGR00018">
    <property type="entry name" value="panC"/>
    <property type="match status" value="1"/>
</dbReference>
<dbReference type="PANTHER" id="PTHR21299">
    <property type="entry name" value="CYTIDYLATE KINASE/PANTOATE-BETA-ALANINE LIGASE"/>
    <property type="match status" value="1"/>
</dbReference>
<dbReference type="PANTHER" id="PTHR21299:SF1">
    <property type="entry name" value="PANTOATE--BETA-ALANINE LIGASE"/>
    <property type="match status" value="1"/>
</dbReference>
<dbReference type="Pfam" id="PF02569">
    <property type="entry name" value="Pantoate_ligase"/>
    <property type="match status" value="1"/>
</dbReference>
<dbReference type="SUPFAM" id="SSF52374">
    <property type="entry name" value="Nucleotidylyl transferase"/>
    <property type="match status" value="1"/>
</dbReference>
<sequence length="282" mass="32433">MPLLFKKIKDLRNFLKNKRCEGKEIGFVPTMGYLHEGHRQLIKLARMQNDIVVVSIFVNPTQFGEGEDYDRYPRDLERDLEICEEEGVDVVFAPEVDEIYPKGYRTKVCVGELGKVLEGEFRPGHFDGVATIVVKLFNIVQPNRAYFGEKDYQQLKIIEQVVEDLNIPVEIVPVPIVREEDGLAYSSRNVYLSPEERESALSIYKSFLLAEKMIKAGERDAKRIKEAIRAFIERHPHVKGVDYVEITDQNLNPKETVEKGDRILVAVRVGNARLIDNWKVQS</sequence>
<feature type="chain" id="PRO_0000128197" description="Pantothenate synthetase">
    <location>
        <begin position="1"/>
        <end position="282"/>
    </location>
</feature>
<feature type="active site" description="Proton donor" evidence="1">
    <location>
        <position position="38"/>
    </location>
</feature>
<feature type="binding site" evidence="1">
    <location>
        <begin position="31"/>
        <end position="38"/>
    </location>
    <ligand>
        <name>ATP</name>
        <dbReference type="ChEBI" id="CHEBI:30616"/>
    </ligand>
</feature>
<feature type="binding site" evidence="1">
    <location>
        <position position="62"/>
    </location>
    <ligand>
        <name>(R)-pantoate</name>
        <dbReference type="ChEBI" id="CHEBI:15980"/>
    </ligand>
</feature>
<feature type="binding site" evidence="1">
    <location>
        <position position="62"/>
    </location>
    <ligand>
        <name>beta-alanine</name>
        <dbReference type="ChEBI" id="CHEBI:57966"/>
    </ligand>
</feature>
<feature type="binding site" evidence="1">
    <location>
        <begin position="148"/>
        <end position="151"/>
    </location>
    <ligand>
        <name>ATP</name>
        <dbReference type="ChEBI" id="CHEBI:30616"/>
    </ligand>
</feature>
<feature type="binding site" evidence="1">
    <location>
        <position position="154"/>
    </location>
    <ligand>
        <name>(R)-pantoate</name>
        <dbReference type="ChEBI" id="CHEBI:15980"/>
    </ligand>
</feature>
<feature type="binding site" evidence="1">
    <location>
        <position position="177"/>
    </location>
    <ligand>
        <name>ATP</name>
        <dbReference type="ChEBI" id="CHEBI:30616"/>
    </ligand>
</feature>
<feature type="binding site" evidence="1">
    <location>
        <begin position="185"/>
        <end position="188"/>
    </location>
    <ligand>
        <name>ATP</name>
        <dbReference type="ChEBI" id="CHEBI:30616"/>
    </ligand>
</feature>
<reference key="1">
    <citation type="journal article" date="1998" name="Nature">
        <title>The complete genome of the hyperthermophilic bacterium Aquifex aeolicus.</title>
        <authorList>
            <person name="Deckert G."/>
            <person name="Warren P.V."/>
            <person name="Gaasterland T."/>
            <person name="Young W.G."/>
            <person name="Lenox A.L."/>
            <person name="Graham D.E."/>
            <person name="Overbeek R."/>
            <person name="Snead M.A."/>
            <person name="Keller M."/>
            <person name="Aujay M."/>
            <person name="Huber R."/>
            <person name="Feldman R.A."/>
            <person name="Short J.M."/>
            <person name="Olsen G.J."/>
            <person name="Swanson R.V."/>
        </authorList>
    </citation>
    <scope>NUCLEOTIDE SEQUENCE [LARGE SCALE GENOMIC DNA]</scope>
    <source>
        <strain>VF5</strain>
    </source>
</reference>
<organism>
    <name type="scientific">Aquifex aeolicus (strain VF5)</name>
    <dbReference type="NCBI Taxonomy" id="224324"/>
    <lineage>
        <taxon>Bacteria</taxon>
        <taxon>Pseudomonadati</taxon>
        <taxon>Aquificota</taxon>
        <taxon>Aquificia</taxon>
        <taxon>Aquificales</taxon>
        <taxon>Aquificaceae</taxon>
        <taxon>Aquifex</taxon>
    </lineage>
</organism>
<comment type="function">
    <text evidence="1">Catalyzes the condensation of pantoate with beta-alanine in an ATP-dependent reaction via a pantoyl-adenylate intermediate.</text>
</comment>
<comment type="catalytic activity">
    <reaction evidence="1">
        <text>(R)-pantoate + beta-alanine + ATP = (R)-pantothenate + AMP + diphosphate + H(+)</text>
        <dbReference type="Rhea" id="RHEA:10912"/>
        <dbReference type="ChEBI" id="CHEBI:15378"/>
        <dbReference type="ChEBI" id="CHEBI:15980"/>
        <dbReference type="ChEBI" id="CHEBI:29032"/>
        <dbReference type="ChEBI" id="CHEBI:30616"/>
        <dbReference type="ChEBI" id="CHEBI:33019"/>
        <dbReference type="ChEBI" id="CHEBI:57966"/>
        <dbReference type="ChEBI" id="CHEBI:456215"/>
        <dbReference type="EC" id="6.3.2.1"/>
    </reaction>
</comment>
<comment type="pathway">
    <text evidence="1">Cofactor biosynthesis; (R)-pantothenate biosynthesis; (R)-pantothenate from (R)-pantoate and beta-alanine: step 1/1.</text>
</comment>
<comment type="subunit">
    <text evidence="1">Homodimer.</text>
</comment>
<comment type="subcellular location">
    <subcellularLocation>
        <location evidence="1">Cytoplasm</location>
    </subcellularLocation>
</comment>
<comment type="miscellaneous">
    <text evidence="1">The reaction proceeds by a bi uni uni bi ping pong mechanism.</text>
</comment>
<comment type="similarity">
    <text evidence="1">Belongs to the pantothenate synthetase family.</text>
</comment>
<gene>
    <name evidence="1" type="primary">panC</name>
    <name type="ordered locus">aq_2132</name>
</gene>